<accession>Q9LUP2</accession>
<proteinExistence type="predicted"/>
<sequence length="413" mass="47674">MRSEITRETKLLFDLPQDVIEEIFSKVPVTCLRRIRSTCKRLYALLKDRGFIRKHFAKSARQYHALMLKNFRFYSVSFNPNGTEMDVASLFNGERSLIDPYSSSEAIISQAFHCDGLLLCTTKENRLVVLNPFSGQTKWLQPQNRCKIDEAYVLGYDNSDLCHSYKILSFPDLYEQELETIKNAGRDLDVTPEGDLELKTDDFSSNSWRRNLGVTPHGGLGLKIYDFSSNSWKKLDVITPEGCLKSYGVSLKGNAYWVYMSKRRGVNDYSLLSFDFSTESFQHLCVPFHQEADCFGTMALSVVREEHLSLLYQSCETLKVEIWMTKEIDTTFVSWKKFLTVDLEPHLPHLLMFSCRMSFFIDEEKKVAVCCDRDNKVHVVGEDEYRVSSGFYFLDFEGITCCLTVFGYVPRLV</sequence>
<organism>
    <name type="scientific">Arabidopsis thaliana</name>
    <name type="common">Mouse-ear cress</name>
    <dbReference type="NCBI Taxonomy" id="3702"/>
    <lineage>
        <taxon>Eukaryota</taxon>
        <taxon>Viridiplantae</taxon>
        <taxon>Streptophyta</taxon>
        <taxon>Embryophyta</taxon>
        <taxon>Tracheophyta</taxon>
        <taxon>Spermatophyta</taxon>
        <taxon>Magnoliopsida</taxon>
        <taxon>eudicotyledons</taxon>
        <taxon>Gunneridae</taxon>
        <taxon>Pentapetalae</taxon>
        <taxon>rosids</taxon>
        <taxon>malvids</taxon>
        <taxon>Brassicales</taxon>
        <taxon>Brassicaceae</taxon>
        <taxon>Camelineae</taxon>
        <taxon>Arabidopsis</taxon>
    </lineage>
</organism>
<dbReference type="EMBL" id="AB022219">
    <property type="protein sequence ID" value="BAB02045.1"/>
    <property type="molecule type" value="Genomic_DNA"/>
</dbReference>
<dbReference type="EMBL" id="CP002686">
    <property type="protein sequence ID" value="AEE75968.1"/>
    <property type="molecule type" value="Genomic_DNA"/>
</dbReference>
<dbReference type="RefSeq" id="NP_188383.1">
    <property type="nucleotide sequence ID" value="NM_112636.1"/>
</dbReference>
<dbReference type="PaxDb" id="3702-AT3G17560.1"/>
<dbReference type="EnsemblPlants" id="AT3G17560.1">
    <property type="protein sequence ID" value="AT3G17560.1"/>
    <property type="gene ID" value="AT3G17560"/>
</dbReference>
<dbReference type="GeneID" id="821022"/>
<dbReference type="Gramene" id="AT3G17560.1">
    <property type="protein sequence ID" value="AT3G17560.1"/>
    <property type="gene ID" value="AT3G17560"/>
</dbReference>
<dbReference type="KEGG" id="ath:AT3G17560"/>
<dbReference type="Araport" id="AT3G17560"/>
<dbReference type="TAIR" id="AT3G17560"/>
<dbReference type="HOGENOM" id="CLU_034692_0_0_1"/>
<dbReference type="InParanoid" id="Q9LUP2"/>
<dbReference type="OMA" id="FEGITCC"/>
<dbReference type="PhylomeDB" id="Q9LUP2"/>
<dbReference type="PRO" id="PR:Q9LUP2"/>
<dbReference type="Proteomes" id="UP000006548">
    <property type="component" value="Chromosome 3"/>
</dbReference>
<dbReference type="CDD" id="cd22157">
    <property type="entry name" value="F-box_AtFBW1-like"/>
    <property type="match status" value="1"/>
</dbReference>
<dbReference type="Gene3D" id="1.20.1280.50">
    <property type="match status" value="1"/>
</dbReference>
<dbReference type="InterPro" id="IPR006527">
    <property type="entry name" value="F-box-assoc_dom_typ1"/>
</dbReference>
<dbReference type="InterPro" id="IPR017451">
    <property type="entry name" value="F-box-assoc_interact_dom"/>
</dbReference>
<dbReference type="InterPro" id="IPR036047">
    <property type="entry name" value="F-box-like_dom_sf"/>
</dbReference>
<dbReference type="InterPro" id="IPR001810">
    <property type="entry name" value="F-box_dom"/>
</dbReference>
<dbReference type="InterPro" id="IPR011044">
    <property type="entry name" value="Quino_amine_DH_bsu"/>
</dbReference>
<dbReference type="InterPro" id="IPR050796">
    <property type="entry name" value="SCF_F-box_component"/>
</dbReference>
<dbReference type="NCBIfam" id="TIGR01640">
    <property type="entry name" value="F_box_assoc_1"/>
    <property type="match status" value="2"/>
</dbReference>
<dbReference type="PANTHER" id="PTHR31672">
    <property type="entry name" value="BNACNNG10540D PROTEIN"/>
    <property type="match status" value="1"/>
</dbReference>
<dbReference type="Pfam" id="PF00646">
    <property type="entry name" value="F-box"/>
    <property type="match status" value="1"/>
</dbReference>
<dbReference type="Pfam" id="PF07734">
    <property type="entry name" value="FBA_1"/>
    <property type="match status" value="1"/>
</dbReference>
<dbReference type="SMART" id="SM00256">
    <property type="entry name" value="FBOX"/>
    <property type="match status" value="1"/>
</dbReference>
<dbReference type="SUPFAM" id="SSF81383">
    <property type="entry name" value="F-box domain"/>
    <property type="match status" value="1"/>
</dbReference>
<dbReference type="SUPFAM" id="SSF50969">
    <property type="entry name" value="YVTN repeat-like/Quinoprotein amine dehydrogenase"/>
    <property type="match status" value="1"/>
</dbReference>
<dbReference type="PROSITE" id="PS50181">
    <property type="entry name" value="FBOX"/>
    <property type="match status" value="1"/>
</dbReference>
<gene>
    <name type="ordered locus">At3g17560</name>
    <name type="ORF">MKP6.11</name>
</gene>
<reference key="1">
    <citation type="journal article" date="2000" name="DNA Res.">
        <title>Structural analysis of Arabidopsis thaliana chromosome 3. I. Sequence features of the regions of 4,504,864 bp covered by sixty P1 and TAC clones.</title>
        <authorList>
            <person name="Sato S."/>
            <person name="Nakamura Y."/>
            <person name="Kaneko T."/>
            <person name="Katoh T."/>
            <person name="Asamizu E."/>
            <person name="Tabata S."/>
        </authorList>
    </citation>
    <scope>NUCLEOTIDE SEQUENCE [LARGE SCALE GENOMIC DNA]</scope>
    <source>
        <strain>cv. Columbia</strain>
    </source>
</reference>
<reference key="2">
    <citation type="journal article" date="2017" name="Plant J.">
        <title>Araport11: a complete reannotation of the Arabidopsis thaliana reference genome.</title>
        <authorList>
            <person name="Cheng C.Y."/>
            <person name="Krishnakumar V."/>
            <person name="Chan A.P."/>
            <person name="Thibaud-Nissen F."/>
            <person name="Schobel S."/>
            <person name="Town C.D."/>
        </authorList>
    </citation>
    <scope>GENOME REANNOTATION</scope>
    <source>
        <strain>cv. Columbia</strain>
    </source>
</reference>
<evidence type="ECO:0000255" key="1">
    <source>
        <dbReference type="PROSITE-ProRule" id="PRU00080"/>
    </source>
</evidence>
<keyword id="KW-1185">Reference proteome</keyword>
<name>FB155_ARATH</name>
<feature type="chain" id="PRO_0000283425" description="Putative F-box protein At3g17560">
    <location>
        <begin position="1"/>
        <end position="413"/>
    </location>
</feature>
<feature type="domain" description="F-box" evidence="1">
    <location>
        <begin position="9"/>
        <end position="55"/>
    </location>
</feature>
<protein>
    <recommendedName>
        <fullName>Putative F-box protein At3g17560</fullName>
    </recommendedName>
</protein>